<accession>C0Q8D4</accession>
<dbReference type="EMBL" id="CP000857">
    <property type="protein sequence ID" value="ACN46779.1"/>
    <property type="molecule type" value="Genomic_DNA"/>
</dbReference>
<dbReference type="RefSeq" id="WP_000288731.1">
    <property type="nucleotide sequence ID" value="NC_012125.1"/>
</dbReference>
<dbReference type="SMR" id="C0Q8D4"/>
<dbReference type="KEGG" id="sei:SPC_2678"/>
<dbReference type="HOGENOM" id="CLU_118972_1_0_6"/>
<dbReference type="Proteomes" id="UP000001599">
    <property type="component" value="Chromosome"/>
</dbReference>
<dbReference type="GO" id="GO:0000917">
    <property type="term" value="P:division septum assembly"/>
    <property type="evidence" value="ECO:0007669"/>
    <property type="project" value="UniProtKB-KW"/>
</dbReference>
<dbReference type="GO" id="GO:0006281">
    <property type="term" value="P:DNA repair"/>
    <property type="evidence" value="ECO:0007669"/>
    <property type="project" value="TreeGrafter"/>
</dbReference>
<dbReference type="GO" id="GO:0051782">
    <property type="term" value="P:negative regulation of cell division"/>
    <property type="evidence" value="ECO:0007669"/>
    <property type="project" value="UniProtKB-UniRule"/>
</dbReference>
<dbReference type="GO" id="GO:0009432">
    <property type="term" value="P:SOS response"/>
    <property type="evidence" value="ECO:0007669"/>
    <property type="project" value="UniProtKB-UniRule"/>
</dbReference>
<dbReference type="FunFam" id="3.40.50.300:FF:000417">
    <property type="entry name" value="Cell division inhibitor SulA"/>
    <property type="match status" value="1"/>
</dbReference>
<dbReference type="Gene3D" id="3.40.50.300">
    <property type="entry name" value="P-loop containing nucleotide triphosphate hydrolases"/>
    <property type="match status" value="1"/>
</dbReference>
<dbReference type="HAMAP" id="MF_01179">
    <property type="entry name" value="SulA"/>
    <property type="match status" value="1"/>
</dbReference>
<dbReference type="InterPro" id="IPR004596">
    <property type="entry name" value="Cell_div_suppressor_SulA"/>
</dbReference>
<dbReference type="InterPro" id="IPR027417">
    <property type="entry name" value="P-loop_NTPase"/>
</dbReference>
<dbReference type="InterPro" id="IPR050356">
    <property type="entry name" value="SulA_CellDiv_inhibitor"/>
</dbReference>
<dbReference type="InterPro" id="IPR047696">
    <property type="entry name" value="SulA_enterobact"/>
</dbReference>
<dbReference type="NCBIfam" id="NF007892">
    <property type="entry name" value="PRK10595.1"/>
    <property type="match status" value="1"/>
</dbReference>
<dbReference type="NCBIfam" id="TIGR00623">
    <property type="entry name" value="SOS_SulA_coli"/>
    <property type="match status" value="1"/>
</dbReference>
<dbReference type="PANTHER" id="PTHR35369">
    <property type="entry name" value="BLR3025 PROTEIN-RELATED"/>
    <property type="match status" value="1"/>
</dbReference>
<dbReference type="PANTHER" id="PTHR35369:SF4">
    <property type="entry name" value="CELL DIVISION INHIBITOR SULA"/>
    <property type="match status" value="1"/>
</dbReference>
<dbReference type="Pfam" id="PF03846">
    <property type="entry name" value="SulA"/>
    <property type="match status" value="1"/>
</dbReference>
<dbReference type="PIRSF" id="PIRSF003093">
    <property type="entry name" value="SulA"/>
    <property type="match status" value="1"/>
</dbReference>
<dbReference type="SUPFAM" id="SSF52540">
    <property type="entry name" value="P-loop containing nucleoside triphosphate hydrolases"/>
    <property type="match status" value="1"/>
</dbReference>
<proteinExistence type="inferred from homology"/>
<gene>
    <name evidence="1" type="primary">sulA</name>
    <name type="ordered locus">SPC_2678</name>
</gene>
<comment type="function">
    <text evidence="1">Component of the SOS system and an inhibitor of cell division. Accumulation of SulA causes rapid cessation of cell division and the appearance of long, non-septate filaments. In the presence of GTP, binds a polymerization-competent form of FtsZ in a 1:1 ratio, thus inhibiting FtsZ polymerization and therefore preventing it from participating in the assembly of the Z ring. This mechanism prevents the premature segregation of damaged DNA to daughter cells during cell division.</text>
</comment>
<comment type="subunit">
    <text evidence="1">Interacts with FtsZ.</text>
</comment>
<comment type="induction">
    <text evidence="1">By DNA damage, as part of the SOS response.</text>
</comment>
<comment type="PTM">
    <text evidence="1">Is rapidly cleaved and degraded by the Lon protease once DNA damage is repaired.</text>
</comment>
<comment type="similarity">
    <text evidence="1">Belongs to the SulA family.</text>
</comment>
<reference key="1">
    <citation type="journal article" date="2009" name="PLoS ONE">
        <title>Salmonella paratyphi C: genetic divergence from Salmonella choleraesuis and pathogenic convergence with Salmonella typhi.</title>
        <authorList>
            <person name="Liu W.-Q."/>
            <person name="Feng Y."/>
            <person name="Wang Y."/>
            <person name="Zou Q.-H."/>
            <person name="Chen F."/>
            <person name="Guo J.-T."/>
            <person name="Peng Y.-H."/>
            <person name="Jin Y."/>
            <person name="Li Y.-G."/>
            <person name="Hu S.-N."/>
            <person name="Johnston R.N."/>
            <person name="Liu G.-R."/>
            <person name="Liu S.-L."/>
        </authorList>
    </citation>
    <scope>NUCLEOTIDE SEQUENCE [LARGE SCALE GENOMIC DNA]</scope>
    <source>
        <strain>RKS4594</strain>
    </source>
</reference>
<name>SULA_SALPC</name>
<feature type="chain" id="PRO_1000164431" description="Cell division inhibitor SulA">
    <location>
        <begin position="1"/>
        <end position="169"/>
    </location>
</feature>
<feature type="region of interest" description="FtsZ binding" evidence="1">
    <location>
        <begin position="106"/>
        <end position="112"/>
    </location>
</feature>
<feature type="region of interest" description="Lon protease binding" evidence="1">
    <location>
        <begin position="162"/>
        <end position="169"/>
    </location>
</feature>
<feature type="site" description="Essential for degradation by Lon protease" evidence="1">
    <location>
        <position position="169"/>
    </location>
</feature>
<evidence type="ECO:0000255" key="1">
    <source>
        <dbReference type="HAMAP-Rule" id="MF_01179"/>
    </source>
</evidence>
<organism>
    <name type="scientific">Salmonella paratyphi C (strain RKS4594)</name>
    <dbReference type="NCBI Taxonomy" id="476213"/>
    <lineage>
        <taxon>Bacteria</taxon>
        <taxon>Pseudomonadati</taxon>
        <taxon>Pseudomonadota</taxon>
        <taxon>Gammaproteobacteria</taxon>
        <taxon>Enterobacterales</taxon>
        <taxon>Enterobacteriaceae</taxon>
        <taxon>Salmonella</taxon>
    </lineage>
</organism>
<sequence length="169" mass="18994">MYTSGYANRSSSFPTTTHNAARTATENAAAGLVSEVVYHEDQPMMAQLLLLPLLRQLGQQSRWQLWLTPQQKLSREWVQSSGLPLTKVMQISQLAPRHTLESMIRALRTGNYSVVIGWMTEELTEEEHASLVEAAKVGNAVGFIMHPVRAHALPRRQHSGLKIHSNLYH</sequence>
<protein>
    <recommendedName>
        <fullName evidence="1">Cell division inhibitor SulA</fullName>
    </recommendedName>
</protein>
<keyword id="KW-0131">Cell cycle</keyword>
<keyword id="KW-0132">Cell division</keyword>
<keyword id="KW-0227">DNA damage</keyword>
<keyword id="KW-0717">Septation</keyword>
<keyword id="KW-0742">SOS response</keyword>